<comment type="function">
    <text evidence="1">Isomerase that catalyzes the conversion of deoxy-ribose 1-phosphate (dRib-1-P) and ribose 1-phosphate (Rib-1-P) to deoxy-ribose 5-phosphate (dRib-5-P) and ribose 5-phosphate (Rib-5-P), respectively.</text>
</comment>
<comment type="catalytic activity">
    <reaction evidence="1">
        <text>2-deoxy-alpha-D-ribose 1-phosphate = 2-deoxy-D-ribose 5-phosphate</text>
        <dbReference type="Rhea" id="RHEA:27658"/>
        <dbReference type="ChEBI" id="CHEBI:57259"/>
        <dbReference type="ChEBI" id="CHEBI:62877"/>
        <dbReference type="EC" id="5.4.2.7"/>
    </reaction>
</comment>
<comment type="catalytic activity">
    <reaction evidence="1">
        <text>alpha-D-ribose 1-phosphate = D-ribose 5-phosphate</text>
        <dbReference type="Rhea" id="RHEA:18793"/>
        <dbReference type="ChEBI" id="CHEBI:57720"/>
        <dbReference type="ChEBI" id="CHEBI:78346"/>
        <dbReference type="EC" id="5.4.2.7"/>
    </reaction>
</comment>
<comment type="cofactor">
    <cofactor evidence="1">
        <name>Mn(2+)</name>
        <dbReference type="ChEBI" id="CHEBI:29035"/>
    </cofactor>
    <text evidence="1">Binds 2 manganese ions.</text>
</comment>
<comment type="pathway">
    <text evidence="1">Carbohydrate degradation; 2-deoxy-D-ribose 1-phosphate degradation; D-glyceraldehyde 3-phosphate and acetaldehyde from 2-deoxy-alpha-D-ribose 1-phosphate: step 1/2.</text>
</comment>
<comment type="subcellular location">
    <subcellularLocation>
        <location evidence="1">Cytoplasm</location>
    </subcellularLocation>
</comment>
<comment type="similarity">
    <text evidence="1">Belongs to the phosphopentomutase family.</text>
</comment>
<organism>
    <name type="scientific">Listeria welshimeri serovar 6b (strain ATCC 35897 / DSM 20650 / CCUG 15529 / CIP 8149 / NCTC 11857 / SLCC 5334 / V8)</name>
    <dbReference type="NCBI Taxonomy" id="386043"/>
    <lineage>
        <taxon>Bacteria</taxon>
        <taxon>Bacillati</taxon>
        <taxon>Bacillota</taxon>
        <taxon>Bacilli</taxon>
        <taxon>Bacillales</taxon>
        <taxon>Listeriaceae</taxon>
        <taxon>Listeria</taxon>
    </lineage>
</organism>
<feature type="chain" id="PRO_1000046391" description="Phosphopentomutase">
    <location>
        <begin position="1"/>
        <end position="394"/>
    </location>
</feature>
<feature type="binding site" evidence="1">
    <location>
        <position position="14"/>
    </location>
    <ligand>
        <name>Mn(2+)</name>
        <dbReference type="ChEBI" id="CHEBI:29035"/>
        <label>1</label>
    </ligand>
</feature>
<feature type="binding site" evidence="1">
    <location>
        <position position="287"/>
    </location>
    <ligand>
        <name>Mn(2+)</name>
        <dbReference type="ChEBI" id="CHEBI:29035"/>
        <label>2</label>
    </ligand>
</feature>
<feature type="binding site" evidence="1">
    <location>
        <position position="292"/>
    </location>
    <ligand>
        <name>Mn(2+)</name>
        <dbReference type="ChEBI" id="CHEBI:29035"/>
        <label>2</label>
    </ligand>
</feature>
<feature type="binding site" evidence="1">
    <location>
        <position position="328"/>
    </location>
    <ligand>
        <name>Mn(2+)</name>
        <dbReference type="ChEBI" id="CHEBI:29035"/>
        <label>1</label>
    </ligand>
</feature>
<feature type="binding site" evidence="1">
    <location>
        <position position="329"/>
    </location>
    <ligand>
        <name>Mn(2+)</name>
        <dbReference type="ChEBI" id="CHEBI:29035"/>
        <label>1</label>
    </ligand>
</feature>
<feature type="binding site" evidence="1">
    <location>
        <position position="340"/>
    </location>
    <ligand>
        <name>Mn(2+)</name>
        <dbReference type="ChEBI" id="CHEBI:29035"/>
        <label>2</label>
    </ligand>
</feature>
<evidence type="ECO:0000255" key="1">
    <source>
        <dbReference type="HAMAP-Rule" id="MF_00740"/>
    </source>
</evidence>
<accession>A0AK66</accession>
<name>DEOB_LISW6</name>
<reference key="1">
    <citation type="journal article" date="2006" name="J. Bacteriol.">
        <title>Whole-genome sequence of Listeria welshimeri reveals common steps in genome reduction with Listeria innocua as compared to Listeria monocytogenes.</title>
        <authorList>
            <person name="Hain T."/>
            <person name="Steinweg C."/>
            <person name="Kuenne C.T."/>
            <person name="Billion A."/>
            <person name="Ghai R."/>
            <person name="Chatterjee S.S."/>
            <person name="Domann E."/>
            <person name="Kaerst U."/>
            <person name="Goesmann A."/>
            <person name="Bekel T."/>
            <person name="Bartels D."/>
            <person name="Kaiser O."/>
            <person name="Meyer F."/>
            <person name="Puehler A."/>
            <person name="Weisshaar B."/>
            <person name="Wehland J."/>
            <person name="Liang C."/>
            <person name="Dandekar T."/>
            <person name="Lampidis R."/>
            <person name="Kreft J."/>
            <person name="Goebel W."/>
            <person name="Chakraborty T."/>
        </authorList>
    </citation>
    <scope>NUCLEOTIDE SEQUENCE [LARGE SCALE GENOMIC DNA]</scope>
    <source>
        <strain>ATCC 35897 / DSM 20650 / CCUG 15529 / CIP 8149 / NCTC 11857 / SLCC 5334 / V8</strain>
    </source>
</reference>
<dbReference type="EC" id="5.4.2.7" evidence="1"/>
<dbReference type="EMBL" id="AM263198">
    <property type="protein sequence ID" value="CAK21398.1"/>
    <property type="molecule type" value="Genomic_DNA"/>
</dbReference>
<dbReference type="RefSeq" id="WP_011702745.1">
    <property type="nucleotide sequence ID" value="NC_008555.1"/>
</dbReference>
<dbReference type="SMR" id="A0AK66"/>
<dbReference type="STRING" id="386043.lwe1980"/>
<dbReference type="GeneID" id="61189880"/>
<dbReference type="KEGG" id="lwe:lwe1980"/>
<dbReference type="eggNOG" id="COG1015">
    <property type="taxonomic scope" value="Bacteria"/>
</dbReference>
<dbReference type="HOGENOM" id="CLU_053861_0_0_9"/>
<dbReference type="OrthoDB" id="9769930at2"/>
<dbReference type="UniPathway" id="UPA00002">
    <property type="reaction ID" value="UER00467"/>
</dbReference>
<dbReference type="Proteomes" id="UP000000779">
    <property type="component" value="Chromosome"/>
</dbReference>
<dbReference type="GO" id="GO:0005829">
    <property type="term" value="C:cytosol"/>
    <property type="evidence" value="ECO:0007669"/>
    <property type="project" value="TreeGrafter"/>
</dbReference>
<dbReference type="GO" id="GO:0000287">
    <property type="term" value="F:magnesium ion binding"/>
    <property type="evidence" value="ECO:0007669"/>
    <property type="project" value="InterPro"/>
</dbReference>
<dbReference type="GO" id="GO:0030145">
    <property type="term" value="F:manganese ion binding"/>
    <property type="evidence" value="ECO:0007669"/>
    <property type="project" value="UniProtKB-UniRule"/>
</dbReference>
<dbReference type="GO" id="GO:0008973">
    <property type="term" value="F:phosphopentomutase activity"/>
    <property type="evidence" value="ECO:0007669"/>
    <property type="project" value="UniProtKB-UniRule"/>
</dbReference>
<dbReference type="GO" id="GO:0006018">
    <property type="term" value="P:2-deoxyribose 1-phosphate catabolic process"/>
    <property type="evidence" value="ECO:0007669"/>
    <property type="project" value="UniProtKB-UniRule"/>
</dbReference>
<dbReference type="GO" id="GO:0006015">
    <property type="term" value="P:5-phosphoribose 1-diphosphate biosynthetic process"/>
    <property type="evidence" value="ECO:0007669"/>
    <property type="project" value="UniProtKB-UniPathway"/>
</dbReference>
<dbReference type="GO" id="GO:0043094">
    <property type="term" value="P:metabolic compound salvage"/>
    <property type="evidence" value="ECO:0007669"/>
    <property type="project" value="InterPro"/>
</dbReference>
<dbReference type="GO" id="GO:0009117">
    <property type="term" value="P:nucleotide metabolic process"/>
    <property type="evidence" value="ECO:0007669"/>
    <property type="project" value="InterPro"/>
</dbReference>
<dbReference type="CDD" id="cd16009">
    <property type="entry name" value="PPM"/>
    <property type="match status" value="1"/>
</dbReference>
<dbReference type="FunFam" id="3.30.70.1250:FF:000001">
    <property type="entry name" value="Phosphopentomutase"/>
    <property type="match status" value="1"/>
</dbReference>
<dbReference type="Gene3D" id="3.40.720.10">
    <property type="entry name" value="Alkaline Phosphatase, subunit A"/>
    <property type="match status" value="1"/>
</dbReference>
<dbReference type="Gene3D" id="3.30.70.1250">
    <property type="entry name" value="Phosphopentomutase"/>
    <property type="match status" value="1"/>
</dbReference>
<dbReference type="HAMAP" id="MF_00740">
    <property type="entry name" value="Phosphopentomut"/>
    <property type="match status" value="1"/>
</dbReference>
<dbReference type="InterPro" id="IPR017850">
    <property type="entry name" value="Alkaline_phosphatase_core_sf"/>
</dbReference>
<dbReference type="InterPro" id="IPR010045">
    <property type="entry name" value="DeoB"/>
</dbReference>
<dbReference type="InterPro" id="IPR006124">
    <property type="entry name" value="Metalloenzyme"/>
</dbReference>
<dbReference type="InterPro" id="IPR024052">
    <property type="entry name" value="Phosphopentomutase_DeoB_cap_sf"/>
</dbReference>
<dbReference type="NCBIfam" id="TIGR01696">
    <property type="entry name" value="deoB"/>
    <property type="match status" value="1"/>
</dbReference>
<dbReference type="NCBIfam" id="NF003766">
    <property type="entry name" value="PRK05362.1"/>
    <property type="match status" value="1"/>
</dbReference>
<dbReference type="PANTHER" id="PTHR21110">
    <property type="entry name" value="PHOSPHOPENTOMUTASE"/>
    <property type="match status" value="1"/>
</dbReference>
<dbReference type="PANTHER" id="PTHR21110:SF0">
    <property type="entry name" value="PHOSPHOPENTOMUTASE"/>
    <property type="match status" value="1"/>
</dbReference>
<dbReference type="Pfam" id="PF01676">
    <property type="entry name" value="Metalloenzyme"/>
    <property type="match status" value="1"/>
</dbReference>
<dbReference type="PIRSF" id="PIRSF001491">
    <property type="entry name" value="Ppentomutase"/>
    <property type="match status" value="1"/>
</dbReference>
<dbReference type="SUPFAM" id="SSF53649">
    <property type="entry name" value="Alkaline phosphatase-like"/>
    <property type="match status" value="1"/>
</dbReference>
<dbReference type="SUPFAM" id="SSF143856">
    <property type="entry name" value="DeoB insert domain-like"/>
    <property type="match status" value="1"/>
</dbReference>
<keyword id="KW-0963">Cytoplasm</keyword>
<keyword id="KW-0413">Isomerase</keyword>
<keyword id="KW-0464">Manganese</keyword>
<keyword id="KW-0479">Metal-binding</keyword>
<proteinExistence type="inferred from homology"/>
<protein>
    <recommendedName>
        <fullName evidence="1">Phosphopentomutase</fullName>
        <ecNumber evidence="1">5.4.2.7</ecNumber>
    </recommendedName>
    <alternativeName>
        <fullName evidence="1">Phosphodeoxyribomutase</fullName>
    </alternativeName>
</protein>
<sequence length="394" mass="43732">MPDKFKRVHVVVMDSVGIGEAPDAAKFGDFDVDTFGHIAKHVGGLNMPEMGKLGLSNIREIDGIKKAEKPLAYYTKMQEASNGKDTMTGHWEIMGLYIDTPFRVFPDGFPDDLINQIEEKTGRKVIGNKPASGTEIMAELGEEHVKTGALIVYTSADSVLQIAAHEDVVPLEELYEICEFCREITLDDPYMLGRIIARPFVGEPGAFVRTPNRHDYALKPFKPTVMDALKDGGKDVIAIGKISDIFDGEGVTESIRTKSNMDGMDQFIAVLDKDFNGMSFLNLVDFDALFGHRRDPQGYADALVDFDGRLVEVMEKLTEDDLLIITADHGNDPTYTGTDHTREFVPLLVYSPRFKNGGSELELRKTFADLGATVADNFDVKMPEYGKSFLKDLK</sequence>
<gene>
    <name evidence="1" type="primary">deoB</name>
    <name type="ordered locus">lwe1980</name>
</gene>